<organism>
    <name type="scientific">Listeria monocytogenes serovar 1/2a (strain ATCC BAA-679 / EGD-e)</name>
    <dbReference type="NCBI Taxonomy" id="169963"/>
    <lineage>
        <taxon>Bacteria</taxon>
        <taxon>Bacillati</taxon>
        <taxon>Bacillota</taxon>
        <taxon>Bacilli</taxon>
        <taxon>Bacillales</taxon>
        <taxon>Listeriaceae</taxon>
        <taxon>Listeria</taxon>
    </lineage>
</organism>
<sequence length="380" mass="42262">MKKIILLGATGSIGTQTLAIIRENPEKFQVVALSFGRNMERGRAIIKEFKPKMVAVWHTRDRVTLEAEFPNVKFFNGLEGLREVATYLDGDVLLNAVMGSVGLLPTLDAIEAGKAIAIANKETLVTAGHLVMRAAKEKNISLLPVDSEHSAILQALNGENTERIEKIILTASGGSFRDKTREQLSAVTVKEALKHPNWNMGNKLTIDSATMFNKGLEVMEAHWLFGVDYDDIEVVIQRESIIHSMVQFVDGSFIAQLGTPDMRMPIQYALTYPDRLYIPYEKEFRITDFSALHFEKVDYERFPALKLAYNAGKIGGTMPTVLNAANEIAVAGFLNGQVAFYNIEALVENAMNRHTSISNPDLDTILQVDQETRAYVKTLL</sequence>
<protein>
    <recommendedName>
        <fullName evidence="1">1-deoxy-D-xylulose 5-phosphate reductoisomerase</fullName>
        <shortName evidence="1">DXP reductoisomerase</shortName>
        <ecNumber evidence="1">1.1.1.267</ecNumber>
    </recommendedName>
    <alternativeName>
        <fullName evidence="1">1-deoxyxylulose-5-phosphate reductoisomerase</fullName>
    </alternativeName>
    <alternativeName>
        <fullName evidence="1">2-C-methyl-D-erythritol 4-phosphate synthase</fullName>
    </alternativeName>
</protein>
<keyword id="KW-0414">Isoprene biosynthesis</keyword>
<keyword id="KW-0464">Manganese</keyword>
<keyword id="KW-0479">Metal-binding</keyword>
<keyword id="KW-0521">NADP</keyword>
<keyword id="KW-0560">Oxidoreductase</keyword>
<keyword id="KW-1185">Reference proteome</keyword>
<name>DXR_LISMO</name>
<proteinExistence type="inferred from homology"/>
<feature type="chain" id="PRO_0000163671" description="1-deoxy-D-xylulose 5-phosphate reductoisomerase">
    <location>
        <begin position="1"/>
        <end position="380"/>
    </location>
</feature>
<feature type="binding site" evidence="1">
    <location>
        <position position="10"/>
    </location>
    <ligand>
        <name>NADPH</name>
        <dbReference type="ChEBI" id="CHEBI:57783"/>
    </ligand>
</feature>
<feature type="binding site" evidence="1">
    <location>
        <position position="11"/>
    </location>
    <ligand>
        <name>NADPH</name>
        <dbReference type="ChEBI" id="CHEBI:57783"/>
    </ligand>
</feature>
<feature type="binding site" evidence="1">
    <location>
        <position position="12"/>
    </location>
    <ligand>
        <name>NADPH</name>
        <dbReference type="ChEBI" id="CHEBI:57783"/>
    </ligand>
</feature>
<feature type="binding site" evidence="1">
    <location>
        <position position="13"/>
    </location>
    <ligand>
        <name>NADPH</name>
        <dbReference type="ChEBI" id="CHEBI:57783"/>
    </ligand>
</feature>
<feature type="binding site" evidence="1">
    <location>
        <position position="36"/>
    </location>
    <ligand>
        <name>NADPH</name>
        <dbReference type="ChEBI" id="CHEBI:57783"/>
    </ligand>
</feature>
<feature type="binding site" evidence="1">
    <location>
        <position position="37"/>
    </location>
    <ligand>
        <name>NADPH</name>
        <dbReference type="ChEBI" id="CHEBI:57783"/>
    </ligand>
</feature>
<feature type="binding site" evidence="1">
    <location>
        <position position="38"/>
    </location>
    <ligand>
        <name>NADPH</name>
        <dbReference type="ChEBI" id="CHEBI:57783"/>
    </ligand>
</feature>
<feature type="binding site" evidence="1">
    <location>
        <position position="120"/>
    </location>
    <ligand>
        <name>NADPH</name>
        <dbReference type="ChEBI" id="CHEBI:57783"/>
    </ligand>
</feature>
<feature type="binding site" evidence="1">
    <location>
        <position position="121"/>
    </location>
    <ligand>
        <name>1-deoxy-D-xylulose 5-phosphate</name>
        <dbReference type="ChEBI" id="CHEBI:57792"/>
    </ligand>
</feature>
<feature type="binding site" evidence="1">
    <location>
        <position position="122"/>
    </location>
    <ligand>
        <name>NADPH</name>
        <dbReference type="ChEBI" id="CHEBI:57783"/>
    </ligand>
</feature>
<feature type="binding site" evidence="1">
    <location>
        <position position="146"/>
    </location>
    <ligand>
        <name>Mn(2+)</name>
        <dbReference type="ChEBI" id="CHEBI:29035"/>
    </ligand>
</feature>
<feature type="binding site" evidence="1">
    <location>
        <position position="147"/>
    </location>
    <ligand>
        <name>1-deoxy-D-xylulose 5-phosphate</name>
        <dbReference type="ChEBI" id="CHEBI:57792"/>
    </ligand>
</feature>
<feature type="binding site" evidence="1">
    <location>
        <position position="148"/>
    </location>
    <ligand>
        <name>1-deoxy-D-xylulose 5-phosphate</name>
        <dbReference type="ChEBI" id="CHEBI:57792"/>
    </ligand>
</feature>
<feature type="binding site" evidence="1">
    <location>
        <position position="148"/>
    </location>
    <ligand>
        <name>Mn(2+)</name>
        <dbReference type="ChEBI" id="CHEBI:29035"/>
    </ligand>
</feature>
<feature type="binding site" evidence="1">
    <location>
        <position position="172"/>
    </location>
    <ligand>
        <name>1-deoxy-D-xylulose 5-phosphate</name>
        <dbReference type="ChEBI" id="CHEBI:57792"/>
    </ligand>
</feature>
<feature type="binding site" evidence="1">
    <location>
        <position position="195"/>
    </location>
    <ligand>
        <name>1-deoxy-D-xylulose 5-phosphate</name>
        <dbReference type="ChEBI" id="CHEBI:57792"/>
    </ligand>
</feature>
<feature type="binding site" evidence="1">
    <location>
        <position position="201"/>
    </location>
    <ligand>
        <name>NADPH</name>
        <dbReference type="ChEBI" id="CHEBI:57783"/>
    </ligand>
</feature>
<feature type="binding site" evidence="1">
    <location>
        <position position="208"/>
    </location>
    <ligand>
        <name>1-deoxy-D-xylulose 5-phosphate</name>
        <dbReference type="ChEBI" id="CHEBI:57792"/>
    </ligand>
</feature>
<feature type="binding site" evidence="1">
    <location>
        <position position="213"/>
    </location>
    <ligand>
        <name>1-deoxy-D-xylulose 5-phosphate</name>
        <dbReference type="ChEBI" id="CHEBI:57792"/>
    </ligand>
</feature>
<feature type="binding site" evidence="1">
    <location>
        <position position="214"/>
    </location>
    <ligand>
        <name>1-deoxy-D-xylulose 5-phosphate</name>
        <dbReference type="ChEBI" id="CHEBI:57792"/>
    </ligand>
</feature>
<feature type="binding site" evidence="1">
    <location>
        <position position="217"/>
    </location>
    <ligand>
        <name>1-deoxy-D-xylulose 5-phosphate</name>
        <dbReference type="ChEBI" id="CHEBI:57792"/>
    </ligand>
</feature>
<feature type="binding site" evidence="1">
    <location>
        <position position="217"/>
    </location>
    <ligand>
        <name>Mn(2+)</name>
        <dbReference type="ChEBI" id="CHEBI:29035"/>
    </ligand>
</feature>
<reference key="1">
    <citation type="journal article" date="2001" name="Science">
        <title>Comparative genomics of Listeria species.</title>
        <authorList>
            <person name="Glaser P."/>
            <person name="Frangeul L."/>
            <person name="Buchrieser C."/>
            <person name="Rusniok C."/>
            <person name="Amend A."/>
            <person name="Baquero F."/>
            <person name="Berche P."/>
            <person name="Bloecker H."/>
            <person name="Brandt P."/>
            <person name="Chakraborty T."/>
            <person name="Charbit A."/>
            <person name="Chetouani F."/>
            <person name="Couve E."/>
            <person name="de Daruvar A."/>
            <person name="Dehoux P."/>
            <person name="Domann E."/>
            <person name="Dominguez-Bernal G."/>
            <person name="Duchaud E."/>
            <person name="Durant L."/>
            <person name="Dussurget O."/>
            <person name="Entian K.-D."/>
            <person name="Fsihi H."/>
            <person name="Garcia-del Portillo F."/>
            <person name="Garrido P."/>
            <person name="Gautier L."/>
            <person name="Goebel W."/>
            <person name="Gomez-Lopez N."/>
            <person name="Hain T."/>
            <person name="Hauf J."/>
            <person name="Jackson D."/>
            <person name="Jones L.-M."/>
            <person name="Kaerst U."/>
            <person name="Kreft J."/>
            <person name="Kuhn M."/>
            <person name="Kunst F."/>
            <person name="Kurapkat G."/>
            <person name="Madueno E."/>
            <person name="Maitournam A."/>
            <person name="Mata Vicente J."/>
            <person name="Ng E."/>
            <person name="Nedjari H."/>
            <person name="Nordsiek G."/>
            <person name="Novella S."/>
            <person name="de Pablos B."/>
            <person name="Perez-Diaz J.-C."/>
            <person name="Purcell R."/>
            <person name="Remmel B."/>
            <person name="Rose M."/>
            <person name="Schlueter T."/>
            <person name="Simoes N."/>
            <person name="Tierrez A."/>
            <person name="Vazquez-Boland J.-A."/>
            <person name="Voss H."/>
            <person name="Wehland J."/>
            <person name="Cossart P."/>
        </authorList>
    </citation>
    <scope>NUCLEOTIDE SEQUENCE [LARGE SCALE GENOMIC DNA]</scope>
    <source>
        <strain>ATCC BAA-679 / EGD-e</strain>
    </source>
</reference>
<accession>Q8Y7G4</accession>
<comment type="function">
    <text evidence="1">Catalyzes the NADPH-dependent rearrangement and reduction of 1-deoxy-D-xylulose-5-phosphate (DXP) to 2-C-methyl-D-erythritol 4-phosphate (MEP).</text>
</comment>
<comment type="catalytic activity">
    <reaction evidence="1">
        <text>2-C-methyl-D-erythritol 4-phosphate + NADP(+) = 1-deoxy-D-xylulose 5-phosphate + NADPH + H(+)</text>
        <dbReference type="Rhea" id="RHEA:13717"/>
        <dbReference type="ChEBI" id="CHEBI:15378"/>
        <dbReference type="ChEBI" id="CHEBI:57783"/>
        <dbReference type="ChEBI" id="CHEBI:57792"/>
        <dbReference type="ChEBI" id="CHEBI:58262"/>
        <dbReference type="ChEBI" id="CHEBI:58349"/>
        <dbReference type="EC" id="1.1.1.267"/>
    </reaction>
    <physiologicalReaction direction="right-to-left" evidence="1">
        <dbReference type="Rhea" id="RHEA:13719"/>
    </physiologicalReaction>
</comment>
<comment type="cofactor">
    <cofactor evidence="1">
        <name>Mg(2+)</name>
        <dbReference type="ChEBI" id="CHEBI:18420"/>
    </cofactor>
    <cofactor evidence="1">
        <name>Mn(2+)</name>
        <dbReference type="ChEBI" id="CHEBI:29035"/>
    </cofactor>
</comment>
<comment type="pathway">
    <text evidence="1">Isoprenoid biosynthesis; isopentenyl diphosphate biosynthesis via DXP pathway; isopentenyl diphosphate from 1-deoxy-D-xylulose 5-phosphate: step 1/6.</text>
</comment>
<comment type="similarity">
    <text evidence="1">Belongs to the DXR family.</text>
</comment>
<dbReference type="EC" id="1.1.1.267" evidence="1"/>
<dbReference type="EMBL" id="AL591978">
    <property type="protein sequence ID" value="CAC99395.1"/>
    <property type="molecule type" value="Genomic_DNA"/>
</dbReference>
<dbReference type="PIR" id="AE1239">
    <property type="entry name" value="AE1239"/>
</dbReference>
<dbReference type="RefSeq" id="NP_464842.1">
    <property type="nucleotide sequence ID" value="NC_003210.1"/>
</dbReference>
<dbReference type="RefSeq" id="WP_010989733.1">
    <property type="nucleotide sequence ID" value="NZ_CP149495.1"/>
</dbReference>
<dbReference type="SMR" id="Q8Y7G4"/>
<dbReference type="STRING" id="169963.gene:17593974"/>
<dbReference type="PaxDb" id="169963-lmo1317"/>
<dbReference type="EnsemblBacteria" id="CAC99395">
    <property type="protein sequence ID" value="CAC99395"/>
    <property type="gene ID" value="CAC99395"/>
</dbReference>
<dbReference type="GeneID" id="987697"/>
<dbReference type="KEGG" id="lmo:lmo1317"/>
<dbReference type="PATRIC" id="fig|169963.11.peg.1354"/>
<dbReference type="eggNOG" id="COG0743">
    <property type="taxonomic scope" value="Bacteria"/>
</dbReference>
<dbReference type="HOGENOM" id="CLU_035714_4_0_9"/>
<dbReference type="OrthoDB" id="9806546at2"/>
<dbReference type="PhylomeDB" id="Q8Y7G4"/>
<dbReference type="BioCyc" id="LMON169963:LMO1317-MONOMER"/>
<dbReference type="UniPathway" id="UPA00056">
    <property type="reaction ID" value="UER00092"/>
</dbReference>
<dbReference type="Proteomes" id="UP000000817">
    <property type="component" value="Chromosome"/>
</dbReference>
<dbReference type="GO" id="GO:0030604">
    <property type="term" value="F:1-deoxy-D-xylulose-5-phosphate reductoisomerase activity"/>
    <property type="evidence" value="ECO:0000318"/>
    <property type="project" value="GO_Central"/>
</dbReference>
<dbReference type="GO" id="GO:0030145">
    <property type="term" value="F:manganese ion binding"/>
    <property type="evidence" value="ECO:0000318"/>
    <property type="project" value="GO_Central"/>
</dbReference>
<dbReference type="GO" id="GO:0070402">
    <property type="term" value="F:NADPH binding"/>
    <property type="evidence" value="ECO:0000318"/>
    <property type="project" value="GO_Central"/>
</dbReference>
<dbReference type="GO" id="GO:0051484">
    <property type="term" value="P:isopentenyl diphosphate biosynthetic process, methylerythritol 4-phosphate pathway involved in terpenoid biosynthetic process"/>
    <property type="evidence" value="ECO:0000318"/>
    <property type="project" value="GO_Central"/>
</dbReference>
<dbReference type="FunFam" id="1.10.1740.10:FF:000005">
    <property type="entry name" value="1-deoxy-D-xylulose 5-phosphate reductoisomerase"/>
    <property type="match status" value="1"/>
</dbReference>
<dbReference type="FunFam" id="3.40.50.720:FF:000045">
    <property type="entry name" value="1-deoxy-D-xylulose 5-phosphate reductoisomerase"/>
    <property type="match status" value="1"/>
</dbReference>
<dbReference type="Gene3D" id="1.10.1740.10">
    <property type="match status" value="1"/>
</dbReference>
<dbReference type="Gene3D" id="3.40.50.720">
    <property type="entry name" value="NAD(P)-binding Rossmann-like Domain"/>
    <property type="match status" value="1"/>
</dbReference>
<dbReference type="HAMAP" id="MF_00183">
    <property type="entry name" value="DXP_reductoisom"/>
    <property type="match status" value="1"/>
</dbReference>
<dbReference type="InterPro" id="IPR003821">
    <property type="entry name" value="DXP_reductoisomerase"/>
</dbReference>
<dbReference type="InterPro" id="IPR013644">
    <property type="entry name" value="DXP_reductoisomerase_C"/>
</dbReference>
<dbReference type="InterPro" id="IPR013512">
    <property type="entry name" value="DXP_reductoisomerase_N"/>
</dbReference>
<dbReference type="InterPro" id="IPR026877">
    <property type="entry name" value="DXPR_C"/>
</dbReference>
<dbReference type="InterPro" id="IPR036169">
    <property type="entry name" value="DXPR_C_sf"/>
</dbReference>
<dbReference type="InterPro" id="IPR036291">
    <property type="entry name" value="NAD(P)-bd_dom_sf"/>
</dbReference>
<dbReference type="NCBIfam" id="TIGR00243">
    <property type="entry name" value="Dxr"/>
    <property type="match status" value="1"/>
</dbReference>
<dbReference type="NCBIfam" id="NF009114">
    <property type="entry name" value="PRK12464.1"/>
    <property type="match status" value="1"/>
</dbReference>
<dbReference type="PANTHER" id="PTHR30525">
    <property type="entry name" value="1-DEOXY-D-XYLULOSE 5-PHOSPHATE REDUCTOISOMERASE"/>
    <property type="match status" value="1"/>
</dbReference>
<dbReference type="PANTHER" id="PTHR30525:SF0">
    <property type="entry name" value="1-DEOXY-D-XYLULOSE 5-PHOSPHATE REDUCTOISOMERASE, CHLOROPLASTIC"/>
    <property type="match status" value="1"/>
</dbReference>
<dbReference type="Pfam" id="PF08436">
    <property type="entry name" value="DXP_redisom_C"/>
    <property type="match status" value="1"/>
</dbReference>
<dbReference type="Pfam" id="PF02670">
    <property type="entry name" value="DXP_reductoisom"/>
    <property type="match status" value="1"/>
</dbReference>
<dbReference type="Pfam" id="PF13288">
    <property type="entry name" value="DXPR_C"/>
    <property type="match status" value="1"/>
</dbReference>
<dbReference type="PIRSF" id="PIRSF006205">
    <property type="entry name" value="Dxp_reductismrs"/>
    <property type="match status" value="1"/>
</dbReference>
<dbReference type="SUPFAM" id="SSF69055">
    <property type="entry name" value="1-deoxy-D-xylulose-5-phosphate reductoisomerase, C-terminal domain"/>
    <property type="match status" value="1"/>
</dbReference>
<dbReference type="SUPFAM" id="SSF55347">
    <property type="entry name" value="Glyceraldehyde-3-phosphate dehydrogenase-like, C-terminal domain"/>
    <property type="match status" value="1"/>
</dbReference>
<dbReference type="SUPFAM" id="SSF51735">
    <property type="entry name" value="NAD(P)-binding Rossmann-fold domains"/>
    <property type="match status" value="1"/>
</dbReference>
<gene>
    <name evidence="1" type="primary">dxr</name>
    <name type="ordered locus">lmo1317</name>
</gene>
<evidence type="ECO:0000255" key="1">
    <source>
        <dbReference type="HAMAP-Rule" id="MF_00183"/>
    </source>
</evidence>